<evidence type="ECO:0000305" key="1"/>
<evidence type="ECO:0000305" key="2">
    <source>
    </source>
</evidence>
<sequence length="101" mass="12058">MQLPQKHHGTSSVLVLCCDKVAHCLITTFSLYITSQNAILKMPLEMKNNREKGPALLKHLISMQWHRDNQEYYSHRRYKVYIGHADPSRKYRRQVRYTQRT</sequence>
<proteinExistence type="uncertain"/>
<name>YGF2_YEAST</name>
<gene>
    <name type="ordered locus">YGL052W</name>
</gene>
<protein>
    <recommendedName>
        <fullName>Putative uncharacterized protein YGL052W</fullName>
    </recommendedName>
</protein>
<accession>P53175</accession>
<feature type="chain" id="PRO_0000202768" description="Putative uncharacterized protein YGL052W">
    <location>
        <begin position="1"/>
        <end position="101"/>
    </location>
</feature>
<reference key="1">
    <citation type="journal article" date="1997" name="Yeast">
        <title>The characterization of two new clusters of duplicated genes suggests a 'Lego' organization of the yeast Saccharomyces cerevisiae chromosomes.</title>
        <authorList>
            <person name="Feuermann M."/>
            <person name="de Montigny J."/>
            <person name="Potier S."/>
            <person name="Souciet J.-L."/>
        </authorList>
    </citation>
    <scope>NUCLEOTIDE SEQUENCE [GENOMIC DNA]</scope>
    <source>
        <strain>ATCC 204508 / S288c</strain>
    </source>
</reference>
<reference key="2">
    <citation type="journal article" date="1997" name="Nature">
        <title>The nucleotide sequence of Saccharomyces cerevisiae chromosome VII.</title>
        <authorList>
            <person name="Tettelin H."/>
            <person name="Agostoni-Carbone M.L."/>
            <person name="Albermann K."/>
            <person name="Albers M."/>
            <person name="Arroyo J."/>
            <person name="Backes U."/>
            <person name="Barreiros T."/>
            <person name="Bertani I."/>
            <person name="Bjourson A.J."/>
            <person name="Brueckner M."/>
            <person name="Bruschi C.V."/>
            <person name="Carignani G."/>
            <person name="Castagnoli L."/>
            <person name="Cerdan E."/>
            <person name="Clemente M.L."/>
            <person name="Coblenz A."/>
            <person name="Coglievina M."/>
            <person name="Coissac E."/>
            <person name="Defoor E."/>
            <person name="Del Bino S."/>
            <person name="Delius H."/>
            <person name="Delneri D."/>
            <person name="de Wergifosse P."/>
            <person name="Dujon B."/>
            <person name="Durand P."/>
            <person name="Entian K.-D."/>
            <person name="Eraso P."/>
            <person name="Escribano V."/>
            <person name="Fabiani L."/>
            <person name="Fartmann B."/>
            <person name="Feroli F."/>
            <person name="Feuermann M."/>
            <person name="Frontali L."/>
            <person name="Garcia-Gonzalez M."/>
            <person name="Garcia-Saez M.I."/>
            <person name="Goffeau A."/>
            <person name="Guerreiro P."/>
            <person name="Hani J."/>
            <person name="Hansen M."/>
            <person name="Hebling U."/>
            <person name="Hernandez K."/>
            <person name="Heumann K."/>
            <person name="Hilger F."/>
            <person name="Hofmann B."/>
            <person name="Indge K.J."/>
            <person name="James C.M."/>
            <person name="Klima R."/>
            <person name="Koetter P."/>
            <person name="Kramer B."/>
            <person name="Kramer W."/>
            <person name="Lauquin G."/>
            <person name="Leuther H."/>
            <person name="Louis E.J."/>
            <person name="Maillier E."/>
            <person name="Marconi A."/>
            <person name="Martegani E."/>
            <person name="Mazon M.J."/>
            <person name="Mazzoni C."/>
            <person name="McReynolds A.D.K."/>
            <person name="Melchioretto P."/>
            <person name="Mewes H.-W."/>
            <person name="Minenkova O."/>
            <person name="Mueller-Auer S."/>
            <person name="Nawrocki A."/>
            <person name="Netter P."/>
            <person name="Neu R."/>
            <person name="Nombela C."/>
            <person name="Oliver S.G."/>
            <person name="Panzeri L."/>
            <person name="Paoluzi S."/>
            <person name="Plevani P."/>
            <person name="Portetelle D."/>
            <person name="Portillo F."/>
            <person name="Potier S."/>
            <person name="Purnelle B."/>
            <person name="Rieger M."/>
            <person name="Riles L."/>
            <person name="Rinaldi T."/>
            <person name="Robben J."/>
            <person name="Rodrigues-Pousada C."/>
            <person name="Rodriguez-Belmonte E."/>
            <person name="Rodriguez-Torres A.M."/>
            <person name="Rose M."/>
            <person name="Ruzzi M."/>
            <person name="Saliola M."/>
            <person name="Sanchez-Perez M."/>
            <person name="Schaefer B."/>
            <person name="Schaefer M."/>
            <person name="Scharfe M."/>
            <person name="Schmidheini T."/>
            <person name="Schreer A."/>
            <person name="Skala J."/>
            <person name="Souciet J.-L."/>
            <person name="Steensma H.Y."/>
            <person name="Talla E."/>
            <person name="Thierry A."/>
            <person name="Vandenbol M."/>
            <person name="van der Aart Q.J.M."/>
            <person name="Van Dyck L."/>
            <person name="Vanoni M."/>
            <person name="Verhasselt P."/>
            <person name="Voet M."/>
            <person name="Volckaert G."/>
            <person name="Wambutt R."/>
            <person name="Watson M.D."/>
            <person name="Weber N."/>
            <person name="Wedler E."/>
            <person name="Wedler H."/>
            <person name="Wipfli P."/>
            <person name="Wolf K."/>
            <person name="Wright L.F."/>
            <person name="Zaccaria P."/>
            <person name="Zimmermann M."/>
            <person name="Zollner A."/>
            <person name="Kleine K."/>
        </authorList>
    </citation>
    <scope>NUCLEOTIDE SEQUENCE [LARGE SCALE GENOMIC DNA]</scope>
    <source>
        <strain>ATCC 204508 / S288c</strain>
    </source>
</reference>
<reference key="3">
    <citation type="journal article" date="2014" name="G3 (Bethesda)">
        <title>The reference genome sequence of Saccharomyces cerevisiae: Then and now.</title>
        <authorList>
            <person name="Engel S.R."/>
            <person name="Dietrich F.S."/>
            <person name="Fisk D.G."/>
            <person name="Binkley G."/>
            <person name="Balakrishnan R."/>
            <person name="Costanzo M.C."/>
            <person name="Dwight S.S."/>
            <person name="Hitz B.C."/>
            <person name="Karra K."/>
            <person name="Nash R.S."/>
            <person name="Weng S."/>
            <person name="Wong E.D."/>
            <person name="Lloyd P."/>
            <person name="Skrzypek M.S."/>
            <person name="Miyasato S.R."/>
            <person name="Simison M."/>
            <person name="Cherry J.M."/>
        </authorList>
    </citation>
    <scope>GENOME REANNOTATION</scope>
    <source>
        <strain>ATCC 204508 / S288c</strain>
    </source>
</reference>
<comment type="miscellaneous">
    <text evidence="1">Partially overlaps MST27.</text>
</comment>
<comment type="caution">
    <text evidence="2">Product of a dubious gene prediction unlikely to encode a functional protein. Because of that it is not part of the S.cerevisiae S288c complete/reference proteome set.</text>
</comment>
<dbReference type="EMBL" id="Z72574">
    <property type="protein sequence ID" value="CAA96753.1"/>
    <property type="molecule type" value="Genomic_DNA"/>
</dbReference>
<dbReference type="PIR" id="S64056">
    <property type="entry name" value="S64056"/>
</dbReference>
<dbReference type="DIP" id="DIP-5456N"/>
<dbReference type="STRING" id="4932.YGL052W"/>
<dbReference type="PaxDb" id="4932-YGL052W"/>
<dbReference type="EnsemblFungi" id="YGL052W_mRNA">
    <property type="protein sequence ID" value="YGL052W"/>
    <property type="gene ID" value="YGL052W"/>
</dbReference>
<dbReference type="AGR" id="SGD:S000003020"/>
<dbReference type="SGD" id="S000003020">
    <property type="gene designation" value="YGL052W"/>
</dbReference>
<dbReference type="HOGENOM" id="CLU_2293899_0_0_1"/>
<organism>
    <name type="scientific">Saccharomyces cerevisiae (strain ATCC 204508 / S288c)</name>
    <name type="common">Baker's yeast</name>
    <dbReference type="NCBI Taxonomy" id="559292"/>
    <lineage>
        <taxon>Eukaryota</taxon>
        <taxon>Fungi</taxon>
        <taxon>Dikarya</taxon>
        <taxon>Ascomycota</taxon>
        <taxon>Saccharomycotina</taxon>
        <taxon>Saccharomycetes</taxon>
        <taxon>Saccharomycetales</taxon>
        <taxon>Saccharomycetaceae</taxon>
        <taxon>Saccharomyces</taxon>
    </lineage>
</organism>